<protein>
    <recommendedName>
        <fullName>CD209 antigen</fullName>
    </recommendedName>
    <alternativeName>
        <fullName>Dendritic cell-specific ICAM-3-grabbing non-integrin 1</fullName>
        <shortName>DC-SIGN1</shortName>
    </alternativeName>
    <cdAntigenName>CD209</cdAntigenName>
</protein>
<feature type="chain" id="PRO_0000046593" description="CD209 antigen">
    <location>
        <begin position="1"/>
        <end position="381"/>
    </location>
</feature>
<feature type="topological domain" description="Cytoplasmic" evidence="3">
    <location>
        <begin position="1"/>
        <end position="37"/>
    </location>
</feature>
<feature type="transmembrane region" description="Helical; Signal-anchor for type II membrane protein" evidence="3">
    <location>
        <begin position="38"/>
        <end position="58"/>
    </location>
</feature>
<feature type="topological domain" description="Extracellular" evidence="3">
    <location>
        <begin position="59"/>
        <end position="381"/>
    </location>
</feature>
<feature type="repeat" description="1">
    <location>
        <begin position="96"/>
        <end position="118"/>
    </location>
</feature>
<feature type="repeat" description="2">
    <location>
        <begin position="119"/>
        <end position="141"/>
    </location>
</feature>
<feature type="repeat" description="3">
    <location>
        <begin position="142"/>
        <end position="164"/>
    </location>
</feature>
<feature type="repeat" description="4">
    <location>
        <begin position="165"/>
        <end position="187"/>
    </location>
</feature>
<feature type="repeat" description="5">
    <location>
        <begin position="188"/>
        <end position="210"/>
    </location>
</feature>
<feature type="repeat" description="6">
    <location>
        <begin position="211"/>
        <end position="234"/>
    </location>
</feature>
<feature type="domain" description="C-type lectin" evidence="4">
    <location>
        <begin position="240"/>
        <end position="355"/>
    </location>
</feature>
<feature type="region of interest" description="6 X approximate tandem repeats">
    <location>
        <begin position="96"/>
        <end position="303"/>
    </location>
</feature>
<feature type="region of interest" description="Disordered" evidence="5">
    <location>
        <begin position="359"/>
        <end position="381"/>
    </location>
</feature>
<feature type="short sequence motif" description="Endocytosis signal" evidence="1">
    <location>
        <begin position="14"/>
        <end position="15"/>
    </location>
</feature>
<feature type="short sequence motif" description="Endocytosis signal" evidence="3">
    <location>
        <begin position="16"/>
        <end position="18"/>
    </location>
</feature>
<feature type="short sequence motif" description="Endocytosis signal" evidence="3">
    <location>
        <begin position="31"/>
        <end position="34"/>
    </location>
</feature>
<feature type="binding site" evidence="1">
    <location>
        <position position="324"/>
    </location>
    <ligand>
        <name>Ca(2+)</name>
        <dbReference type="ChEBI" id="CHEBI:29108"/>
    </ligand>
</feature>
<feature type="binding site" evidence="1">
    <location>
        <position position="326"/>
    </location>
    <ligand>
        <name>Ca(2+)</name>
        <dbReference type="ChEBI" id="CHEBI:29108"/>
    </ligand>
</feature>
<feature type="binding site" evidence="1">
    <location>
        <position position="328"/>
    </location>
    <ligand>
        <name>Ca(2+)</name>
        <dbReference type="ChEBI" id="CHEBI:29108"/>
    </ligand>
</feature>
<feature type="binding site" evidence="1">
    <location>
        <position position="331"/>
    </location>
    <ligand>
        <name>Ca(2+)</name>
        <dbReference type="ChEBI" id="CHEBI:29108"/>
    </ligand>
</feature>
<feature type="binding site" evidence="1">
    <location>
        <position position="342"/>
    </location>
    <ligand>
        <name>Ca(2+)</name>
        <dbReference type="ChEBI" id="CHEBI:29108"/>
    </ligand>
</feature>
<feature type="binding site" evidence="1">
    <location>
        <position position="343"/>
    </location>
    <ligand>
        <name>Ca(2+)</name>
        <dbReference type="ChEBI" id="CHEBI:29108"/>
    </ligand>
</feature>
<feature type="glycosylation site" description="N-linked (GlcNAc...) asparagine" evidence="3">
    <location>
        <position position="80"/>
    </location>
</feature>
<feature type="disulfide bond" evidence="4">
    <location>
        <begin position="233"/>
        <end position="244"/>
    </location>
</feature>
<feature type="disulfide bond" evidence="4">
    <location>
        <begin position="261"/>
        <end position="354"/>
    </location>
</feature>
<feature type="disulfide bond" evidence="4">
    <location>
        <begin position="333"/>
        <end position="346"/>
    </location>
</feature>
<feature type="splice variant" id="VSP_010035" description="In isoform 2." evidence="7">
    <location>
        <begin position="16"/>
        <end position="35"/>
    </location>
</feature>
<feature type="splice variant" id="VSP_010036" description="In isoform 2 and isoform 3." evidence="7">
    <location>
        <begin position="85"/>
        <end position="268"/>
    </location>
</feature>
<sequence>MSDSKEPRLQQLGLLEEEQLGGVGFRQTRGYKSLAGCLGHGPLVLQLLSFTLLAGLLVQVSKVPSSLSQGQSKQDAIYQNLTQLKVAVSELSEKSKQQEIYQELTRLKAAVGELPEKSKQQEIYQELTRLKAAVGELPEKSKLQEIYQELTRLKAAVGELPEKSKQQEIYQELSQLKAAVGDLPEKSKQQEIYQKLTQLKAAVDGLPDRSKQQEIYQELIQLKAAVERLCRPCPWEWTFFQGNCYFMSNSQRNWHNSITACQEVGAQLVVIKSAEEQNFLQLQSSRSNRFTWMGLSDLNHEGTWQWVDGSPLLPSFKQYWNKGEPNNIGEEDCAEFSGNGWNDDKCNLAKFWICKKSAASCSGDEERLLSPTPTTPNPPPE</sequence>
<accession>P60883</accession>
<gene>
    <name type="primary">CD209</name>
</gene>
<name>CD209_CHLAE</name>
<comment type="function">
    <text evidence="1">Pathogen-recognition receptor expressed on the surface of immature dendritic cells (DCs) and involved in initiation of primary immune response. Thought to mediate the endocytosis of pathogens which are subsequently degraded in lysosomal compartments. The receptor returns to the cell membrane surface and the pathogen-derived antigens are presented to resting T-cells via MHC class II proteins to initiate the adaptive immune response. Probably recognizes in a calcium-dependent manner high mannose N-linked oligosaccharides in a variety of pathogen antigens (By similarity).</text>
</comment>
<comment type="function">
    <text evidence="1">On DCs it is a high affinity receptor for ICAM2 and ICAM3 by binding to mannose-like carbohydrates. May act as a DC rolling receptor that mediates transendothelial migration of DC presursors from blood to tissues by binding endothelial ICAM2. Seems to regulate DC-induced T-cell proliferation by binding to ICAM3 on T-cells in the immunological synapse formed between DC and T-cells (By similarity).</text>
</comment>
<comment type="subunit">
    <text evidence="2">Homotetramer. Interacts with C1QBP; the interaction is indicative for a C1q:C1QBP:CD209 signaling complex. Interacts with ICAM2 and ICAM3 by binding to mannose-like carbohydrates. Interacts (via C-type lectin domain) with CEACAM1 (via Lewis X moieties); this interaction is regulated by the glycosylation pattern of CEACAM1 on cell types and regulates contact between dendritic cells and neutrophils.</text>
</comment>
<comment type="subcellular location">
    <subcellularLocation>
        <location evidence="1">Membrane</location>
        <topology evidence="1">Single-pass type II membrane protein</topology>
    </subcellularLocation>
</comment>
<comment type="alternative products">
    <event type="alternative splicing"/>
    <isoform>
        <id>P60883-1</id>
        <name>1</name>
        <sequence type="displayed"/>
    </isoform>
    <isoform>
        <id>P60883-2</id>
        <name>2</name>
        <sequence type="described" ref="VSP_010035 VSP_010036"/>
    </isoform>
    <isoform>
        <id>P60883-3</id>
        <name>3</name>
        <sequence type="described" ref="VSP_010036"/>
    </isoform>
</comment>
<comment type="tissue specificity">
    <text evidence="6">Expressed in lymph nodes.</text>
</comment>
<comment type="domain">
    <text evidence="1">The tandem repeat domain, also called neck domain, mediates oligomerization.</text>
</comment>
<comment type="miscellaneous">
    <text>In vitro, is a receptor for SIV and transmits virus to permissive T-cells.</text>
</comment>
<keyword id="KW-1064">Adaptive immunity</keyword>
<keyword id="KW-0025">Alternative splicing</keyword>
<keyword id="KW-0106">Calcium</keyword>
<keyword id="KW-0130">Cell adhesion</keyword>
<keyword id="KW-1015">Disulfide bond</keyword>
<keyword id="KW-0254">Endocytosis</keyword>
<keyword id="KW-0325">Glycoprotein</keyword>
<keyword id="KW-0391">Immunity</keyword>
<keyword id="KW-0399">Innate immunity</keyword>
<keyword id="KW-0430">Lectin</keyword>
<keyword id="KW-0465">Mannose-binding</keyword>
<keyword id="KW-0472">Membrane</keyword>
<keyword id="KW-0479">Metal-binding</keyword>
<keyword id="KW-0675">Receptor</keyword>
<keyword id="KW-0677">Repeat</keyword>
<keyword id="KW-0735">Signal-anchor</keyword>
<keyword id="KW-0812">Transmembrane</keyword>
<keyword id="KW-1133">Transmembrane helix</keyword>
<proteinExistence type="evidence at protein level"/>
<reference key="1">
    <citation type="journal article" date="2004" name="J. Virol.">
        <title>DC-SIGN from African green monkeys is expressed in lymph nodes and mediates infection in trans of simian immunodeficiency virus SIVagm.</title>
        <authorList>
            <person name="Ploquin M.J.-Y."/>
            <person name="Diop O.M."/>
            <person name="Sol-Foulon N."/>
            <person name="Mortara L."/>
            <person name="Faye A."/>
            <person name="Soares M.A."/>
            <person name="Nerrienet E."/>
            <person name="Le Grand R."/>
            <person name="Van Kooyk Y."/>
            <person name="Amara A."/>
            <person name="Schwartz O."/>
            <person name="Barre-Sinoussi F."/>
            <person name="Mueller-Trutwin M.C."/>
        </authorList>
    </citation>
    <scope>NUCLEOTIDE SEQUENCE [MRNA] (ISOFORMS 1; 2 AND 3)</scope>
    <scope>TISSUE SPECIFICITY</scope>
    <scope>INTERACTION WITH SIV</scope>
    <source>
        <strain>Isolate 96028</strain>
        <strain>Isolate 97026</strain>
        <tissue>Lymph node</tissue>
    </source>
</reference>
<dbReference type="EMBL" id="AY189944">
    <property type="protein sequence ID" value="AAP03436.1"/>
    <property type="molecule type" value="mRNA"/>
</dbReference>
<dbReference type="EMBL" id="AY189945">
    <property type="protein sequence ID" value="AAP03437.1"/>
    <property type="molecule type" value="mRNA"/>
</dbReference>
<dbReference type="EMBL" id="AY189946">
    <property type="protein sequence ID" value="AAP03438.1"/>
    <property type="molecule type" value="mRNA"/>
</dbReference>
<dbReference type="EMBL" id="AY189947">
    <property type="protein sequence ID" value="AAP03439.1"/>
    <property type="molecule type" value="mRNA"/>
</dbReference>
<dbReference type="SMR" id="P60883"/>
<dbReference type="GlyCosmos" id="P60883">
    <property type="glycosylation" value="1 site, No reported glycans"/>
</dbReference>
<dbReference type="GO" id="GO:0016020">
    <property type="term" value="C:membrane"/>
    <property type="evidence" value="ECO:0007669"/>
    <property type="project" value="UniProtKB-SubCell"/>
</dbReference>
<dbReference type="GO" id="GO:0005537">
    <property type="term" value="F:D-mannose binding"/>
    <property type="evidence" value="ECO:0007669"/>
    <property type="project" value="UniProtKB-KW"/>
</dbReference>
<dbReference type="GO" id="GO:0046872">
    <property type="term" value="F:metal ion binding"/>
    <property type="evidence" value="ECO:0007669"/>
    <property type="project" value="UniProtKB-KW"/>
</dbReference>
<dbReference type="GO" id="GO:0002250">
    <property type="term" value="P:adaptive immune response"/>
    <property type="evidence" value="ECO:0007669"/>
    <property type="project" value="UniProtKB-KW"/>
</dbReference>
<dbReference type="GO" id="GO:0007155">
    <property type="term" value="P:cell adhesion"/>
    <property type="evidence" value="ECO:0007669"/>
    <property type="project" value="UniProtKB-KW"/>
</dbReference>
<dbReference type="GO" id="GO:0006897">
    <property type="term" value="P:endocytosis"/>
    <property type="evidence" value="ECO:0007669"/>
    <property type="project" value="UniProtKB-KW"/>
</dbReference>
<dbReference type="GO" id="GO:0045087">
    <property type="term" value="P:innate immune response"/>
    <property type="evidence" value="ECO:0007669"/>
    <property type="project" value="UniProtKB-KW"/>
</dbReference>
<dbReference type="CDD" id="cd03590">
    <property type="entry name" value="CLECT_DC-SIGN_like"/>
    <property type="match status" value="1"/>
</dbReference>
<dbReference type="FunFam" id="3.10.100.10:FF:000044">
    <property type="entry name" value="CD209 antigen, isoform CRA_b"/>
    <property type="match status" value="1"/>
</dbReference>
<dbReference type="Gene3D" id="3.10.100.10">
    <property type="entry name" value="Mannose-Binding Protein A, subunit A"/>
    <property type="match status" value="1"/>
</dbReference>
<dbReference type="InterPro" id="IPR001304">
    <property type="entry name" value="C-type_lectin-like"/>
</dbReference>
<dbReference type="InterPro" id="IPR016186">
    <property type="entry name" value="C-type_lectin-like/link_sf"/>
</dbReference>
<dbReference type="InterPro" id="IPR050111">
    <property type="entry name" value="C-type_lectin/snaclec_domain"/>
</dbReference>
<dbReference type="InterPro" id="IPR018378">
    <property type="entry name" value="C-type_lectin_CS"/>
</dbReference>
<dbReference type="InterPro" id="IPR033989">
    <property type="entry name" value="CD209-like_CTLD"/>
</dbReference>
<dbReference type="InterPro" id="IPR016187">
    <property type="entry name" value="CTDL_fold"/>
</dbReference>
<dbReference type="PANTHER" id="PTHR22803">
    <property type="entry name" value="MANNOSE, PHOSPHOLIPASE, LECTIN RECEPTOR RELATED"/>
    <property type="match status" value="1"/>
</dbReference>
<dbReference type="Pfam" id="PF00059">
    <property type="entry name" value="Lectin_C"/>
    <property type="match status" value="1"/>
</dbReference>
<dbReference type="SMART" id="SM00034">
    <property type="entry name" value="CLECT"/>
    <property type="match status" value="1"/>
</dbReference>
<dbReference type="SUPFAM" id="SSF56436">
    <property type="entry name" value="C-type lectin-like"/>
    <property type="match status" value="1"/>
</dbReference>
<dbReference type="PROSITE" id="PS00615">
    <property type="entry name" value="C_TYPE_LECTIN_1"/>
    <property type="match status" value="1"/>
</dbReference>
<dbReference type="PROSITE" id="PS50041">
    <property type="entry name" value="C_TYPE_LECTIN_2"/>
    <property type="match status" value="1"/>
</dbReference>
<evidence type="ECO:0000250" key="1"/>
<evidence type="ECO:0000250" key="2">
    <source>
        <dbReference type="UniProtKB" id="Q9NNX6"/>
    </source>
</evidence>
<evidence type="ECO:0000255" key="3"/>
<evidence type="ECO:0000255" key="4">
    <source>
        <dbReference type="PROSITE-ProRule" id="PRU00040"/>
    </source>
</evidence>
<evidence type="ECO:0000256" key="5">
    <source>
        <dbReference type="SAM" id="MobiDB-lite"/>
    </source>
</evidence>
<evidence type="ECO:0000269" key="6">
    <source>
    </source>
</evidence>
<evidence type="ECO:0000303" key="7">
    <source>
    </source>
</evidence>
<organism>
    <name type="scientific">Chlorocebus aethiops</name>
    <name type="common">Green monkey</name>
    <name type="synonym">Cercopithecus aethiops</name>
    <dbReference type="NCBI Taxonomy" id="9534"/>
    <lineage>
        <taxon>Eukaryota</taxon>
        <taxon>Metazoa</taxon>
        <taxon>Chordata</taxon>
        <taxon>Craniata</taxon>
        <taxon>Vertebrata</taxon>
        <taxon>Euteleostomi</taxon>
        <taxon>Mammalia</taxon>
        <taxon>Eutheria</taxon>
        <taxon>Euarchontoglires</taxon>
        <taxon>Primates</taxon>
        <taxon>Haplorrhini</taxon>
        <taxon>Catarrhini</taxon>
        <taxon>Cercopithecidae</taxon>
        <taxon>Cercopithecinae</taxon>
        <taxon>Chlorocebus</taxon>
    </lineage>
</organism>